<comment type="function">
    <text>Catalyzes the oxidation of glycerol to glycerone. Also acts, more slowly, on a number of other polyols including D-sorbitol, D-arabinitol, D-mannitol, meso-erythritol, adonitol and propylene glycol.</text>
</comment>
<comment type="catalytic activity">
    <reaction>
        <text>glycerol + A = dihydroxyacetone + AH2</text>
        <dbReference type="Rhea" id="RHEA:17493"/>
        <dbReference type="ChEBI" id="CHEBI:13193"/>
        <dbReference type="ChEBI" id="CHEBI:16016"/>
        <dbReference type="ChEBI" id="CHEBI:17499"/>
        <dbReference type="ChEBI" id="CHEBI:17754"/>
        <dbReference type="EC" id="1.1.99.22"/>
    </reaction>
</comment>
<comment type="subcellular location">
    <subcellularLocation>
        <location evidence="3">Cell membrane</location>
        <topology evidence="3">Multi-pass membrane protein</topology>
    </subcellularLocation>
</comment>
<reference key="1">
    <citation type="journal article" date="2003" name="Biochim. Biophys. Acta">
        <title>Membrane-bound D-sorbitol dehydrogenase of Gluconobacter suboxydans IFO 3255 -- enzymatic and genetic characterization.</title>
        <authorList>
            <person name="Hoshino T."/>
            <person name="Sugisawa T."/>
            <person name="Shinjoh M."/>
            <person name="Tomiyama N."/>
            <person name="Miyazaki T."/>
        </authorList>
    </citation>
    <scope>NUCLEOTIDE SEQUENCE [GENOMIC DNA]</scope>
    <source>
        <strain>NBRC 3255 / JCM 20465 / IAM 12306 / LMG 1487</strain>
    </source>
</reference>
<reference key="2">
    <citation type="journal article" date="2003" name="Appl. Environ. Microbiol.">
        <title>5-keto-D-gluconate production is catalyzed by a quinoprotein glycerol dehydrogenase, major polyol dehydrogenase, in gluconobacter species.</title>
        <authorList>
            <person name="Matsushita K."/>
            <person name="Fujii Y."/>
            <person name="Ano Y."/>
            <person name="Toyama H."/>
            <person name="Shinjoh M."/>
            <person name="Tomiyama N."/>
            <person name="Miyazaki T."/>
            <person name="Sugisawa T."/>
            <person name="Hoshino T."/>
            <person name="Adachi O."/>
        </authorList>
    </citation>
    <scope>PROTEIN SEQUENCE OF 2-11</scope>
    <scope>CHARACTERIZATION</scope>
    <source>
        <strain>NBRC 3255 / JCM 20465 / IAM 12306 / LMG 1487</strain>
    </source>
</reference>
<organism>
    <name type="scientific">Gluconobacter thailandicus</name>
    <dbReference type="NCBI Taxonomy" id="257438"/>
    <lineage>
        <taxon>Bacteria</taxon>
        <taxon>Pseudomonadati</taxon>
        <taxon>Pseudomonadota</taxon>
        <taxon>Alphaproteobacteria</taxon>
        <taxon>Acetobacterales</taxon>
        <taxon>Acetobacteraceae</taxon>
        <taxon>Gluconobacter</taxon>
    </lineage>
</organism>
<feature type="initiator methionine" description="Removed" evidence="2">
    <location>
        <position position="1"/>
    </location>
</feature>
<feature type="chain" id="PRO_0000076320" description="Glycerol dehydrogenase small subunit">
    <location>
        <begin position="2"/>
        <end position="126"/>
    </location>
</feature>
<feature type="transmembrane region" description="Helical" evidence="1">
    <location>
        <begin position="13"/>
        <end position="33"/>
    </location>
</feature>
<feature type="transmembrane region" description="Helical" evidence="1">
    <location>
        <begin position="41"/>
        <end position="61"/>
    </location>
</feature>
<feature type="transmembrane region" description="Helical" evidence="1">
    <location>
        <begin position="67"/>
        <end position="87"/>
    </location>
</feature>
<feature type="transmembrane region" description="Helical" evidence="1">
    <location>
        <begin position="92"/>
        <end position="112"/>
    </location>
</feature>
<proteinExistence type="evidence at protein level"/>
<accession>Q8L1D5</accession>
<gene>
    <name type="primary">sldB</name>
</gene>
<dbReference type="EC" id="1.1.99.22"/>
<dbReference type="EMBL" id="AB065091">
    <property type="protein sequence ID" value="BAC02908.1"/>
    <property type="molecule type" value="Genomic_DNA"/>
</dbReference>
<dbReference type="RefSeq" id="WP_007281753.1">
    <property type="nucleotide sequence ID" value="NZ_LHZS01000106.1"/>
</dbReference>
<dbReference type="SMR" id="Q8L1D5"/>
<dbReference type="PATRIC" id="fig|257438.4.peg.3128"/>
<dbReference type="BioCyc" id="MetaCyc:MONOMER-13709"/>
<dbReference type="GO" id="GO:0005886">
    <property type="term" value="C:plasma membrane"/>
    <property type="evidence" value="ECO:0007669"/>
    <property type="project" value="UniProtKB-SubCell"/>
</dbReference>
<dbReference type="GO" id="GO:0047955">
    <property type="term" value="F:glycerol dehydrogenase (acceptor) activity"/>
    <property type="evidence" value="ECO:0007669"/>
    <property type="project" value="UniProtKB-EC"/>
</dbReference>
<evidence type="ECO:0000255" key="1"/>
<evidence type="ECO:0000269" key="2">
    <source>
    </source>
</evidence>
<evidence type="ECO:0000305" key="3"/>
<keyword id="KW-1003">Cell membrane</keyword>
<keyword id="KW-0903">Direct protein sequencing</keyword>
<keyword id="KW-0472">Membrane</keyword>
<keyword id="KW-0560">Oxidoreductase</keyword>
<keyword id="KW-0812">Transmembrane</keyword>
<keyword id="KW-1133">Transmembrane helix</keyword>
<sequence length="126" mass="13736">MPNLQGNRTLTEWLTLLLGVIVLLVGLFFVIGGADLAMLGGSTYYVLCGILLVASGVFMLMGRTLGAFLYLGALAYTWVWSFWEVGFSPIDLLPRAFGPTILGILVALTIPVLRRMESRRTLRGAV</sequence>
<protein>
    <recommendedName>
        <fullName>Glycerol dehydrogenase small subunit</fullName>
        <ecNumber>1.1.99.22</ecNumber>
    </recommendedName>
    <alternativeName>
        <fullName>D-arabitol dehydrogenase small subunit</fullName>
        <shortName>ARDH</shortName>
    </alternativeName>
    <alternativeName>
        <fullName>D-sorbitol dehydrogenase subunit SldB</fullName>
        <shortName>SLDH</shortName>
    </alternativeName>
    <alternativeName>
        <fullName>Gluconate/polyol dehydrogenase small subunit</fullName>
    </alternativeName>
</protein>
<name>SLDB_GLUTH</name>